<proteinExistence type="evidence at transcript level"/>
<organism>
    <name type="scientific">Bos taurus</name>
    <name type="common">Bovine</name>
    <dbReference type="NCBI Taxonomy" id="9913"/>
    <lineage>
        <taxon>Eukaryota</taxon>
        <taxon>Metazoa</taxon>
        <taxon>Chordata</taxon>
        <taxon>Craniata</taxon>
        <taxon>Vertebrata</taxon>
        <taxon>Euteleostomi</taxon>
        <taxon>Mammalia</taxon>
        <taxon>Eutheria</taxon>
        <taxon>Laurasiatheria</taxon>
        <taxon>Artiodactyla</taxon>
        <taxon>Ruminantia</taxon>
        <taxon>Pecora</taxon>
        <taxon>Bovidae</taxon>
        <taxon>Bovinae</taxon>
        <taxon>Bos</taxon>
    </lineage>
</organism>
<feature type="chain" id="PRO_0000284065" description="tRNA (guanine-N(7)-)-methyltransferase">
    <location>
        <begin position="1"/>
        <end position="277"/>
    </location>
</feature>
<feature type="region of interest" description="Disordered" evidence="2">
    <location>
        <begin position="1"/>
        <end position="37"/>
    </location>
</feature>
<feature type="region of interest" description="AlphaC helix" evidence="1">
    <location>
        <begin position="165"/>
        <end position="173"/>
    </location>
</feature>
<feature type="region of interest" description="Alpha6 helix" evidence="1">
    <location>
        <begin position="239"/>
        <end position="247"/>
    </location>
</feature>
<feature type="active site" evidence="1">
    <location>
        <position position="164"/>
    </location>
</feature>
<feature type="binding site" evidence="1">
    <location>
        <position position="85"/>
    </location>
    <ligand>
        <name>S-adenosyl-L-methionine</name>
        <dbReference type="ChEBI" id="CHEBI:59789"/>
    </ligand>
</feature>
<feature type="binding site" evidence="1">
    <location>
        <position position="108"/>
    </location>
    <ligand>
        <name>S-adenosyl-L-methionine</name>
        <dbReference type="ChEBI" id="CHEBI:59789"/>
    </ligand>
</feature>
<feature type="binding site" evidence="1">
    <location>
        <position position="110"/>
    </location>
    <ligand>
        <name>S-adenosyl-L-methionine</name>
        <dbReference type="ChEBI" id="CHEBI:59789"/>
    </ligand>
</feature>
<feature type="binding site" evidence="1">
    <location>
        <position position="141"/>
    </location>
    <ligand>
        <name>S-adenosyl-L-methionine</name>
        <dbReference type="ChEBI" id="CHEBI:59789"/>
    </ligand>
</feature>
<feature type="binding site" evidence="1">
    <location>
        <position position="142"/>
    </location>
    <ligand>
        <name>S-adenosyl-L-methionine</name>
        <dbReference type="ChEBI" id="CHEBI:59789"/>
    </ligand>
</feature>
<feature type="binding site" evidence="1">
    <location>
        <position position="161"/>
    </location>
    <ligand>
        <name>S-adenosyl-L-methionine</name>
        <dbReference type="ChEBI" id="CHEBI:59789"/>
    </ligand>
</feature>
<feature type="binding site" evidence="1">
    <location>
        <position position="239"/>
    </location>
    <ligand>
        <name>S-adenosyl-L-methionine</name>
        <dbReference type="ChEBI" id="CHEBI:59789"/>
    </ligand>
</feature>
<feature type="binding site" evidence="1">
    <location>
        <position position="241"/>
    </location>
    <ligand>
        <name>S-adenosyl-L-methionine</name>
        <dbReference type="ChEBI" id="CHEBI:59789"/>
    </ligand>
</feature>
<feature type="modified residue" description="Phosphoserine" evidence="1">
    <location>
        <position position="28"/>
    </location>
</feature>
<accession>Q2YDF1</accession>
<reference key="1">
    <citation type="journal article" date="2005" name="BMC Genomics">
        <title>Characterization of 954 bovine full-CDS cDNA sequences.</title>
        <authorList>
            <person name="Harhay G.P."/>
            <person name="Sonstegard T.S."/>
            <person name="Keele J.W."/>
            <person name="Heaton M.P."/>
            <person name="Clawson M.L."/>
            <person name="Snelling W.M."/>
            <person name="Wiedmann R.T."/>
            <person name="Van Tassell C.P."/>
            <person name="Smith T.P.L."/>
        </authorList>
    </citation>
    <scope>NUCLEOTIDE SEQUENCE [LARGE SCALE MRNA]</scope>
</reference>
<reference key="2">
    <citation type="submission" date="2005-11" db="EMBL/GenBank/DDBJ databases">
        <authorList>
            <consortium name="NIH - Mammalian Gene Collection (MGC) project"/>
        </authorList>
    </citation>
    <scope>NUCLEOTIDE SEQUENCE [LARGE SCALE MRNA]</scope>
    <source>
        <strain>Crossbred X Angus</strain>
        <tissue>Liver</tissue>
    </source>
</reference>
<evidence type="ECO:0000255" key="1">
    <source>
        <dbReference type="HAMAP-Rule" id="MF_03055"/>
    </source>
</evidence>
<evidence type="ECO:0000256" key="2">
    <source>
        <dbReference type="SAM" id="MobiDB-lite"/>
    </source>
</evidence>
<sequence length="277" mass="31323">MAGTETGDAAGTEAPQPQKRYYRQRAHSNPMADHTLRYPVKPEDMDWSELYPEFFAPLPQNQSHDDPKDKKEKRAQAQVEFADIGCGYGGLLVELSPLFPDTLILGLEIRVKVSDYVQDRIRALRAAPGGGFQNIACLRSNAMKHLPNFFHKGQLTKMFFLFPDPHFKRTKHKWRIISPTLLAEYAYVLRVGGLVYTITDVLELHEWMCTHFEGHPLFERVPLEELSEDPIVGHLGTSTEEGKKVLRNGGKNFPAIFRRIQDPALPAVTPTPTPPGH</sequence>
<comment type="function">
    <text evidence="1">Catalytic component of METTL1-WDR4 methyltransferase complex that mediates the formation of N(7)-methylguanine in a subset of RNA species, such as tRNAs, mRNAs and microRNAs (miRNAs). Catalyzes the formation of N(7)-methylguanine at position 46 (m7G46) in a large subset of tRNAs that contain the 5'-RAGGU-3' motif within the variable loop. M7G46 interacts with C13-G22 in the D-loop to stabilize tRNA tertiary structure and protect tRNAs from decay. Also acts as a methyltransferase for a subset of internal N(7)-methylguanine in mRNAs. Internal N(7)-methylguanine methylation of mRNAs in response to stress promotes their relocalization to stress granules, thereby suppressing their translation. Also methylates a specific subset of miRNAs, such as let-7. N(7)-methylguanine methylation of let-7 miRNA promotes let-7 miRNA processing by disrupting an inhibitory secondary structure within the primary miRNA transcript (pri-miRNA). Acts as a regulator of embryonic stem cell self-renewal and differentiation.</text>
</comment>
<comment type="catalytic activity">
    <reaction evidence="1">
        <text>guanosine(46) in tRNA + S-adenosyl-L-methionine = N(7)-methylguanosine(46) in tRNA + S-adenosyl-L-homocysteine</text>
        <dbReference type="Rhea" id="RHEA:42708"/>
        <dbReference type="Rhea" id="RHEA-COMP:10188"/>
        <dbReference type="Rhea" id="RHEA-COMP:10189"/>
        <dbReference type="ChEBI" id="CHEBI:57856"/>
        <dbReference type="ChEBI" id="CHEBI:59789"/>
        <dbReference type="ChEBI" id="CHEBI:74269"/>
        <dbReference type="ChEBI" id="CHEBI:74480"/>
        <dbReference type="EC" id="2.1.1.33"/>
    </reaction>
</comment>
<comment type="catalytic activity">
    <reaction evidence="1">
        <text>a guanosine in mRNA + S-adenosyl-L-methionine = an N(7)-methylguanosine in mRNA + S-adenosyl-L-homocysteine</text>
        <dbReference type="Rhea" id="RHEA:60508"/>
        <dbReference type="Rhea" id="RHEA-COMP:15584"/>
        <dbReference type="Rhea" id="RHEA-COMP:15585"/>
        <dbReference type="ChEBI" id="CHEBI:57856"/>
        <dbReference type="ChEBI" id="CHEBI:59789"/>
        <dbReference type="ChEBI" id="CHEBI:74269"/>
        <dbReference type="ChEBI" id="CHEBI:74480"/>
    </reaction>
    <physiologicalReaction direction="left-to-right" evidence="1">
        <dbReference type="Rhea" id="RHEA:60509"/>
    </physiologicalReaction>
</comment>
<comment type="catalytic activity">
    <reaction evidence="1">
        <text>a guanosine in miRNA + S-adenosyl-L-methionine = an N(7)-methylguanosine in miRNA + S-adenosyl-L-homocysteine</text>
        <dbReference type="Rhea" id="RHEA:60512"/>
        <dbReference type="Rhea" id="RHEA-COMP:15587"/>
        <dbReference type="Rhea" id="RHEA-COMP:15588"/>
        <dbReference type="ChEBI" id="CHEBI:57856"/>
        <dbReference type="ChEBI" id="CHEBI:59789"/>
        <dbReference type="ChEBI" id="CHEBI:74269"/>
        <dbReference type="ChEBI" id="CHEBI:74480"/>
    </reaction>
    <physiologicalReaction direction="left-to-right" evidence="1">
        <dbReference type="Rhea" id="RHEA:60513"/>
    </physiologicalReaction>
</comment>
<comment type="pathway">
    <text evidence="1">tRNA modification; N(7)-methylguanine-tRNA biosynthesis.</text>
</comment>
<comment type="subunit">
    <text evidence="1">Catalytic component of the METTL1-WDR4 complex, composed of METTL1 and WDR4.</text>
</comment>
<comment type="subcellular location">
    <subcellularLocation>
        <location evidence="1">Nucleus</location>
    </subcellularLocation>
</comment>
<comment type="domain">
    <text evidence="1">Upon tRNA-binding, the alphaC region transforms into a helix, which together with the alpha6 helix secures both ends of the tRNA variable loop. The N-terminal disordered region is part of the catalytic pocket and essential for methyltransferase activity: upon S-adenosyl-L-methionine- and tRNA-binding, the N-terminal disordered region becomes ordered, sandwiched between the bound cofactor and the tRNA, and the WDR4 C-terminus attaches to the METTL1 N-terminus to stabilize the bound tRNA together. Together with WDR4, which also binds tRNAs, tRNAs undergo bending to facilitate G46 flipping into the catalytic pocket to be modified.</text>
</comment>
<comment type="PTM">
    <text evidence="1">Phosphorylation at Ser-28 by PKB/AKT1 inactivates its methyltransferase activity via a steric interference mechanism in the active site that locally disrupts the catalytic center. Phosphorylation at Ser-28 does not affect the interaction with WDR4.</text>
</comment>
<comment type="similarity">
    <text evidence="1">Belongs to the class I-like SAM-binding methyltransferase superfamily. TrmB family.</text>
</comment>
<protein>
    <recommendedName>
        <fullName evidence="1">tRNA (guanine-N(7)-)-methyltransferase</fullName>
        <ecNumber evidence="1">2.1.1.33</ecNumber>
    </recommendedName>
    <alternativeName>
        <fullName evidence="1">Methyltransferase-like protein 1</fullName>
    </alternativeName>
    <alternativeName>
        <fullName evidence="1">mRNA (guanine-N(7)-)-methyltransferase</fullName>
        <ecNumber evidence="1">2.1.1.-</ecNumber>
    </alternativeName>
    <alternativeName>
        <fullName evidence="1">miRNA (guanine-N(7)-)-methyltransferase</fullName>
        <ecNumber evidence="1">2.1.1.-</ecNumber>
    </alternativeName>
    <alternativeName>
        <fullName evidence="1">tRNA (guanine(46)-N(7))-methyltransferase</fullName>
    </alternativeName>
    <alternativeName>
        <fullName evidence="1">tRNA(m7G46)-methyltransferase</fullName>
    </alternativeName>
</protein>
<gene>
    <name evidence="1" type="primary">METTL1</name>
</gene>
<dbReference type="EC" id="2.1.1.33" evidence="1"/>
<dbReference type="EC" id="2.1.1.-" evidence="1"/>
<dbReference type="EMBL" id="BT029912">
    <property type="protein sequence ID" value="ABM06158.1"/>
    <property type="molecule type" value="mRNA"/>
</dbReference>
<dbReference type="EMBL" id="BC110252">
    <property type="protein sequence ID" value="AAI10253.1"/>
    <property type="molecule type" value="mRNA"/>
</dbReference>
<dbReference type="RefSeq" id="NP_001039542.1">
    <property type="nucleotide sequence ID" value="NM_001046077.2"/>
</dbReference>
<dbReference type="SMR" id="Q2YDF1"/>
<dbReference type="FunCoup" id="Q2YDF1">
    <property type="interactions" value="1739"/>
</dbReference>
<dbReference type="STRING" id="9913.ENSBTAP00000022487"/>
<dbReference type="PaxDb" id="9913-ENSBTAP00000022487"/>
<dbReference type="GeneID" id="511197"/>
<dbReference type="KEGG" id="bta:511197"/>
<dbReference type="CTD" id="4234"/>
<dbReference type="VEuPathDB" id="HostDB:ENSBTAG00000016908"/>
<dbReference type="eggNOG" id="KOG3115">
    <property type="taxonomic scope" value="Eukaryota"/>
</dbReference>
<dbReference type="HOGENOM" id="CLU_050910_3_0_1"/>
<dbReference type="InParanoid" id="Q2YDF1"/>
<dbReference type="OMA" id="LPNYFAK"/>
<dbReference type="OrthoDB" id="47276at2759"/>
<dbReference type="TreeFam" id="TF314083"/>
<dbReference type="UniPathway" id="UPA00989"/>
<dbReference type="Proteomes" id="UP000009136">
    <property type="component" value="Chromosome 5"/>
</dbReference>
<dbReference type="Bgee" id="ENSBTAG00000016908">
    <property type="expression patterns" value="Expressed in digestive system secreted substance and 104 other cell types or tissues"/>
</dbReference>
<dbReference type="GO" id="GO:0005634">
    <property type="term" value="C:nucleus"/>
    <property type="evidence" value="ECO:0000250"/>
    <property type="project" value="UniProtKB"/>
</dbReference>
<dbReference type="GO" id="GO:0106143">
    <property type="term" value="C:tRNA (m7G46) methyltransferase complex"/>
    <property type="evidence" value="ECO:0000250"/>
    <property type="project" value="UniProtKB"/>
</dbReference>
<dbReference type="GO" id="GO:0043527">
    <property type="term" value="C:tRNA methyltransferase complex"/>
    <property type="evidence" value="ECO:0000318"/>
    <property type="project" value="GO_Central"/>
</dbReference>
<dbReference type="GO" id="GO:0160090">
    <property type="term" value="F:internal mRNA (guanine-N7-)-methyltransferase activity"/>
    <property type="evidence" value="ECO:0007669"/>
    <property type="project" value="RHEA"/>
</dbReference>
<dbReference type="GO" id="GO:0008176">
    <property type="term" value="F:tRNA (guanine(46)-N7)-methyltransferase activity"/>
    <property type="evidence" value="ECO:0000250"/>
    <property type="project" value="UniProtKB"/>
</dbReference>
<dbReference type="GO" id="GO:0000049">
    <property type="term" value="F:tRNA binding"/>
    <property type="evidence" value="ECO:0007669"/>
    <property type="project" value="UniProtKB-UniRule"/>
</dbReference>
<dbReference type="GO" id="GO:0036265">
    <property type="term" value="P:RNA (guanine-N7)-methylation"/>
    <property type="evidence" value="ECO:0000318"/>
    <property type="project" value="GO_Central"/>
</dbReference>
<dbReference type="GO" id="GO:0106004">
    <property type="term" value="P:tRNA (guanine-N7)-methylation"/>
    <property type="evidence" value="ECO:0000250"/>
    <property type="project" value="UniProtKB"/>
</dbReference>
<dbReference type="GO" id="GO:0030488">
    <property type="term" value="P:tRNA methylation"/>
    <property type="evidence" value="ECO:0000318"/>
    <property type="project" value="GO_Central"/>
</dbReference>
<dbReference type="GO" id="GO:0006400">
    <property type="term" value="P:tRNA modification"/>
    <property type="evidence" value="ECO:0000250"/>
    <property type="project" value="UniProtKB"/>
</dbReference>
<dbReference type="FunFam" id="3.40.50.150:FF:000060">
    <property type="entry name" value="tRNA (guanine-N(7)-)-methyltransferase"/>
    <property type="match status" value="1"/>
</dbReference>
<dbReference type="Gene3D" id="3.40.50.150">
    <property type="entry name" value="Vaccinia Virus protein VP39"/>
    <property type="match status" value="1"/>
</dbReference>
<dbReference type="HAMAP" id="MF_03055">
    <property type="entry name" value="tRNA_methyltr_TrmB_euk"/>
    <property type="match status" value="1"/>
</dbReference>
<dbReference type="InterPro" id="IPR029063">
    <property type="entry name" value="SAM-dependent_MTases_sf"/>
</dbReference>
<dbReference type="InterPro" id="IPR025763">
    <property type="entry name" value="Trm8_euk"/>
</dbReference>
<dbReference type="InterPro" id="IPR003358">
    <property type="entry name" value="tRNA_(Gua-N-7)_MeTrfase_Trmb"/>
</dbReference>
<dbReference type="NCBIfam" id="TIGR00091">
    <property type="entry name" value="tRNA (guanosine(46)-N7)-methyltransferase TrmB"/>
    <property type="match status" value="1"/>
</dbReference>
<dbReference type="PANTHER" id="PTHR23417">
    <property type="entry name" value="3-DEOXY-D-MANNO-OCTULOSONIC-ACID TRANSFERASE/TRNA GUANINE-N 7 - -METHYLTRANSFERASE"/>
    <property type="match status" value="1"/>
</dbReference>
<dbReference type="PANTHER" id="PTHR23417:SF16">
    <property type="entry name" value="TRNA (GUANINE-N(7)-)-METHYLTRANSFERASE"/>
    <property type="match status" value="1"/>
</dbReference>
<dbReference type="Pfam" id="PF02390">
    <property type="entry name" value="Methyltransf_4"/>
    <property type="match status" value="1"/>
</dbReference>
<dbReference type="SUPFAM" id="SSF53335">
    <property type="entry name" value="S-adenosyl-L-methionine-dependent methyltransferases"/>
    <property type="match status" value="1"/>
</dbReference>
<dbReference type="PROSITE" id="PS51625">
    <property type="entry name" value="SAM_MT_TRMB"/>
    <property type="match status" value="1"/>
</dbReference>
<keyword id="KW-0489">Methyltransferase</keyword>
<keyword id="KW-0539">Nucleus</keyword>
<keyword id="KW-0597">Phosphoprotein</keyword>
<keyword id="KW-1185">Reference proteome</keyword>
<keyword id="KW-0694">RNA-binding</keyword>
<keyword id="KW-0949">S-adenosyl-L-methionine</keyword>
<keyword id="KW-0808">Transferase</keyword>
<keyword id="KW-0819">tRNA processing</keyword>
<keyword id="KW-0820">tRNA-binding</keyword>
<name>TRMB_BOVIN</name>